<sequence>MQYQTESWGSYKMSSLGFGGLGMVADTGLLRIESLASESAVVIFSVSTCCMCHAVKGLFRGMGVSPAVHELDLHPYGGDIQRALIRLLGCSGSSSPGSLPVVFIGGKLVGAMDRVMASHINGSLVPLLKDAGALWL</sequence>
<protein>
    <recommendedName>
        <fullName>Glutaredoxin-C7</fullName>
        <shortName>AtGrxC7</shortName>
    </recommendedName>
    <alternativeName>
        <fullName>Protein ROXY 1</fullName>
    </alternativeName>
</protein>
<name>GRXC7_ARATH</name>
<keyword id="KW-0963">Cytoplasm</keyword>
<keyword id="KW-1015">Disulfide bond</keyword>
<keyword id="KW-0249">Electron transport</keyword>
<keyword id="KW-0539">Nucleus</keyword>
<keyword id="KW-0676">Redox-active center</keyword>
<keyword id="KW-1185">Reference proteome</keyword>
<keyword id="KW-0813">Transport</keyword>
<evidence type="ECO:0000250" key="1"/>
<evidence type="ECO:0000250" key="2">
    <source>
        <dbReference type="UniProtKB" id="P17695"/>
    </source>
</evidence>
<evidence type="ECO:0000255" key="3">
    <source>
        <dbReference type="PROSITE-ProRule" id="PRU00686"/>
    </source>
</evidence>
<evidence type="ECO:0000269" key="4">
    <source>
    </source>
</evidence>
<evidence type="ECO:0000269" key="5">
    <source>
    </source>
</evidence>
<evidence type="ECO:0000269" key="6">
    <source>
    </source>
</evidence>
<evidence type="ECO:0000269" key="7">
    <source>
    </source>
</evidence>
<evidence type="ECO:0000305" key="8"/>
<gene>
    <name type="primary">GRXC7</name>
    <name type="synonym">AT.I.24-1</name>
    <name type="synonym">ROXY1</name>
    <name type="ordered locus">At3g02000</name>
    <name type="ORF">F1C9.22</name>
    <name type="ORF">F28J7.33</name>
</gene>
<organism>
    <name type="scientific">Arabidopsis thaliana</name>
    <name type="common">Mouse-ear cress</name>
    <dbReference type="NCBI Taxonomy" id="3702"/>
    <lineage>
        <taxon>Eukaryota</taxon>
        <taxon>Viridiplantae</taxon>
        <taxon>Streptophyta</taxon>
        <taxon>Embryophyta</taxon>
        <taxon>Tracheophyta</taxon>
        <taxon>Spermatophyta</taxon>
        <taxon>Magnoliopsida</taxon>
        <taxon>eudicotyledons</taxon>
        <taxon>Gunneridae</taxon>
        <taxon>Pentapetalae</taxon>
        <taxon>rosids</taxon>
        <taxon>malvids</taxon>
        <taxon>Brassicales</taxon>
        <taxon>Brassicaceae</taxon>
        <taxon>Camelineae</taxon>
        <taxon>Arabidopsis</taxon>
    </lineage>
</organism>
<dbReference type="EMBL" id="U63815">
    <property type="protein sequence ID" value="AAB07873.1"/>
    <property type="status" value="ALT_SEQ"/>
    <property type="molecule type" value="Genomic_DNA"/>
</dbReference>
<dbReference type="EMBL" id="AY910752">
    <property type="protein sequence ID" value="AAX20407.1"/>
    <property type="molecule type" value="mRNA"/>
</dbReference>
<dbReference type="EMBL" id="AC010797">
    <property type="protein sequence ID" value="AAF03450.1"/>
    <property type="molecule type" value="Genomic_DNA"/>
</dbReference>
<dbReference type="EMBL" id="AC011664">
    <property type="protein sequence ID" value="AAF14835.1"/>
    <property type="molecule type" value="Genomic_DNA"/>
</dbReference>
<dbReference type="EMBL" id="CP002686">
    <property type="protein sequence ID" value="AEE73748.1"/>
    <property type="molecule type" value="Genomic_DNA"/>
</dbReference>
<dbReference type="EMBL" id="BT024760">
    <property type="protein sequence ID" value="ABD59098.1"/>
    <property type="molecule type" value="mRNA"/>
</dbReference>
<dbReference type="RefSeq" id="NP_186849.1">
    <property type="nucleotide sequence ID" value="NM_111066.4"/>
</dbReference>
<dbReference type="SMR" id="Q96305"/>
<dbReference type="BioGRID" id="5534">
    <property type="interactions" value="9"/>
</dbReference>
<dbReference type="FunCoup" id="Q96305">
    <property type="interactions" value="41"/>
</dbReference>
<dbReference type="IntAct" id="Q96305">
    <property type="interactions" value="9"/>
</dbReference>
<dbReference type="STRING" id="3702.Q96305"/>
<dbReference type="PaxDb" id="3702-AT3G02000.1"/>
<dbReference type="EnsemblPlants" id="AT3G02000.1">
    <property type="protein sequence ID" value="AT3G02000.1"/>
    <property type="gene ID" value="AT3G02000"/>
</dbReference>
<dbReference type="GeneID" id="820200"/>
<dbReference type="Gramene" id="AT3G02000.1">
    <property type="protein sequence ID" value="AT3G02000.1"/>
    <property type="gene ID" value="AT3G02000"/>
</dbReference>
<dbReference type="KEGG" id="ath:AT3G02000"/>
<dbReference type="Araport" id="AT3G02000"/>
<dbReference type="TAIR" id="AT3G02000">
    <property type="gene designation" value="ROXY1"/>
</dbReference>
<dbReference type="eggNOG" id="KOG1752">
    <property type="taxonomic scope" value="Eukaryota"/>
</dbReference>
<dbReference type="HOGENOM" id="CLU_026126_6_1_1"/>
<dbReference type="InParanoid" id="Q96305"/>
<dbReference type="OMA" id="SWGYYVP"/>
<dbReference type="OrthoDB" id="418495at2759"/>
<dbReference type="PhylomeDB" id="Q96305"/>
<dbReference type="PRO" id="PR:Q96305"/>
<dbReference type="Proteomes" id="UP000006548">
    <property type="component" value="Chromosome 3"/>
</dbReference>
<dbReference type="ExpressionAtlas" id="Q96305">
    <property type="expression patterns" value="differential"/>
</dbReference>
<dbReference type="GO" id="GO:0005737">
    <property type="term" value="C:cytoplasm"/>
    <property type="evidence" value="ECO:0000314"/>
    <property type="project" value="TAIR"/>
</dbReference>
<dbReference type="GO" id="GO:0005634">
    <property type="term" value="C:nucleus"/>
    <property type="evidence" value="ECO:0000314"/>
    <property type="project" value="UniProtKB"/>
</dbReference>
<dbReference type="GO" id="GO:0045892">
    <property type="term" value="P:negative regulation of DNA-templated transcription"/>
    <property type="evidence" value="ECO:0000270"/>
    <property type="project" value="TAIR"/>
</dbReference>
<dbReference type="GO" id="GO:0000122">
    <property type="term" value="P:negative regulation of transcription by RNA polymerase II"/>
    <property type="evidence" value="ECO:0000314"/>
    <property type="project" value="TAIR"/>
</dbReference>
<dbReference type="GO" id="GO:0048441">
    <property type="term" value="P:petal development"/>
    <property type="evidence" value="ECO:0000315"/>
    <property type="project" value="TAIR"/>
</dbReference>
<dbReference type="GO" id="GO:0048451">
    <property type="term" value="P:petal formation"/>
    <property type="evidence" value="ECO:0000315"/>
    <property type="project" value="TAIR"/>
</dbReference>
<dbReference type="GO" id="GO:0048448">
    <property type="term" value="P:stamen morphogenesis"/>
    <property type="evidence" value="ECO:0000315"/>
    <property type="project" value="TAIR"/>
</dbReference>
<dbReference type="CDD" id="cd03419">
    <property type="entry name" value="GRX_GRXh_1_2_like"/>
    <property type="match status" value="1"/>
</dbReference>
<dbReference type="FunFam" id="3.40.30.10:FF:000028">
    <property type="entry name" value="Glutaredoxin family protein"/>
    <property type="match status" value="1"/>
</dbReference>
<dbReference type="Gene3D" id="3.40.30.10">
    <property type="entry name" value="Glutaredoxin"/>
    <property type="match status" value="1"/>
</dbReference>
<dbReference type="InterPro" id="IPR011905">
    <property type="entry name" value="GlrX-like_pln_2"/>
</dbReference>
<dbReference type="InterPro" id="IPR002109">
    <property type="entry name" value="Glutaredoxin"/>
</dbReference>
<dbReference type="InterPro" id="IPR036249">
    <property type="entry name" value="Thioredoxin-like_sf"/>
</dbReference>
<dbReference type="NCBIfam" id="TIGR02189">
    <property type="entry name" value="GlrX-like_plant"/>
    <property type="match status" value="1"/>
</dbReference>
<dbReference type="PANTHER" id="PTHR10168">
    <property type="entry name" value="GLUTAREDOXIN"/>
    <property type="match status" value="1"/>
</dbReference>
<dbReference type="Pfam" id="PF00462">
    <property type="entry name" value="Glutaredoxin"/>
    <property type="match status" value="1"/>
</dbReference>
<dbReference type="SUPFAM" id="SSF52833">
    <property type="entry name" value="Thioredoxin-like"/>
    <property type="match status" value="1"/>
</dbReference>
<dbReference type="PROSITE" id="PS51354">
    <property type="entry name" value="GLUTAREDOXIN_2"/>
    <property type="match status" value="1"/>
</dbReference>
<feature type="chain" id="PRO_0000268714" description="Glutaredoxin-C7">
    <location>
        <begin position="1"/>
        <end position="136"/>
    </location>
</feature>
<feature type="domain" description="Glutaredoxin" evidence="3">
    <location>
        <begin position="29"/>
        <end position="135"/>
    </location>
</feature>
<feature type="short sequence motif" description="Responsive for interaction with TGA factors">
    <location>
        <begin position="133"/>
        <end position="136"/>
    </location>
</feature>
<feature type="disulfide bond" description="Redox-active" evidence="1">
    <location>
        <begin position="49"/>
        <end position="52"/>
    </location>
</feature>
<feature type="mutagenesis site" description="Alters the function during petal development." evidence="4">
    <original>C</original>
    <variation>S</variation>
    <location>
        <position position="49"/>
    </location>
</feature>
<feature type="mutagenesis site" description="No effect on the function during petal development." evidence="4">
    <original>C</original>
    <variation>S</variation>
    <location>
        <position position="52"/>
    </location>
</feature>
<feature type="mutagenesis site" description="No effect on the function during petal development." evidence="4">
    <original>C</original>
    <variation>S</variation>
    <location>
        <position position="90"/>
    </location>
</feature>
<feature type="mutagenesis site" description="Affects glutathione binding." evidence="5">
    <original>G</original>
    <variation>A</variation>
    <location>
        <position position="110"/>
    </location>
</feature>
<reference key="1">
    <citation type="journal article" date="1989" name="Mol. Gen. Genet.">
        <title>The gene family encoding the Arabidopsis thaliana translation elongation factor EF-1 alpha: molecular cloning, characterization and expression.</title>
        <authorList>
            <person name="Axelos M."/>
            <person name="Bardet C."/>
            <person name="Liboz T."/>
            <person name="Le van Thai A."/>
            <person name="Curie C."/>
            <person name="Lescure B."/>
        </authorList>
    </citation>
    <scope>NUCLEOTIDE SEQUENCE [GENOMIC DNA]</scope>
    <source>
        <strain>cv. Columbia</strain>
    </source>
</reference>
<reference key="2">
    <citation type="journal article" date="2005" name="Development">
        <title>ROXY1, a member of the plant glutaredoxin family, is required for petal development in Arabidopsis thaliana.</title>
        <authorList>
            <person name="Xing S."/>
            <person name="Rosso M.G."/>
            <person name="Zachgo S."/>
        </authorList>
    </citation>
    <scope>NUCLEOTIDE SEQUENCE [MRNA]</scope>
    <scope>FUNCTION</scope>
    <scope>TISSUE SPECIFICITY</scope>
    <scope>DEVELOPMENTAL STAGE</scope>
    <scope>MUTAGENESIS OF CYS-49; CYS-52 AND CYS-90</scope>
    <scope>DISRUPTION PHENOTYPE</scope>
</reference>
<reference key="3">
    <citation type="journal article" date="2000" name="Nature">
        <title>Sequence and analysis of chromosome 3 of the plant Arabidopsis thaliana.</title>
        <authorList>
            <person name="Salanoubat M."/>
            <person name="Lemcke K."/>
            <person name="Rieger M."/>
            <person name="Ansorge W."/>
            <person name="Unseld M."/>
            <person name="Fartmann B."/>
            <person name="Valle G."/>
            <person name="Bloecker H."/>
            <person name="Perez-Alonso M."/>
            <person name="Obermaier B."/>
            <person name="Delseny M."/>
            <person name="Boutry M."/>
            <person name="Grivell L.A."/>
            <person name="Mache R."/>
            <person name="Puigdomenech P."/>
            <person name="De Simone V."/>
            <person name="Choisne N."/>
            <person name="Artiguenave F."/>
            <person name="Robert C."/>
            <person name="Brottier P."/>
            <person name="Wincker P."/>
            <person name="Cattolico L."/>
            <person name="Weissenbach J."/>
            <person name="Saurin W."/>
            <person name="Quetier F."/>
            <person name="Schaefer M."/>
            <person name="Mueller-Auer S."/>
            <person name="Gabel C."/>
            <person name="Fuchs M."/>
            <person name="Benes V."/>
            <person name="Wurmbach E."/>
            <person name="Drzonek H."/>
            <person name="Erfle H."/>
            <person name="Jordan N."/>
            <person name="Bangert S."/>
            <person name="Wiedelmann R."/>
            <person name="Kranz H."/>
            <person name="Voss H."/>
            <person name="Holland R."/>
            <person name="Brandt P."/>
            <person name="Nyakatura G."/>
            <person name="Vezzi A."/>
            <person name="D'Angelo M."/>
            <person name="Pallavicini A."/>
            <person name="Toppo S."/>
            <person name="Simionati B."/>
            <person name="Conrad A."/>
            <person name="Hornischer K."/>
            <person name="Kauer G."/>
            <person name="Loehnert T.-H."/>
            <person name="Nordsiek G."/>
            <person name="Reichelt J."/>
            <person name="Scharfe M."/>
            <person name="Schoen O."/>
            <person name="Bargues M."/>
            <person name="Terol J."/>
            <person name="Climent J."/>
            <person name="Navarro P."/>
            <person name="Collado C."/>
            <person name="Perez-Perez A."/>
            <person name="Ottenwaelder B."/>
            <person name="Duchemin D."/>
            <person name="Cooke R."/>
            <person name="Laudie M."/>
            <person name="Berger-Llauro C."/>
            <person name="Purnelle B."/>
            <person name="Masuy D."/>
            <person name="de Haan M."/>
            <person name="Maarse A.C."/>
            <person name="Alcaraz J.-P."/>
            <person name="Cottet A."/>
            <person name="Casacuberta E."/>
            <person name="Monfort A."/>
            <person name="Argiriou A."/>
            <person name="Flores M."/>
            <person name="Liguori R."/>
            <person name="Vitale D."/>
            <person name="Mannhaupt G."/>
            <person name="Haase D."/>
            <person name="Schoof H."/>
            <person name="Rudd S."/>
            <person name="Zaccaria P."/>
            <person name="Mewes H.-W."/>
            <person name="Mayer K.F.X."/>
            <person name="Kaul S."/>
            <person name="Town C.D."/>
            <person name="Koo H.L."/>
            <person name="Tallon L.J."/>
            <person name="Jenkins J."/>
            <person name="Rooney T."/>
            <person name="Rizzo M."/>
            <person name="Walts A."/>
            <person name="Utterback T."/>
            <person name="Fujii C.Y."/>
            <person name="Shea T.P."/>
            <person name="Creasy T.H."/>
            <person name="Haas B."/>
            <person name="Maiti R."/>
            <person name="Wu D."/>
            <person name="Peterson J."/>
            <person name="Van Aken S."/>
            <person name="Pai G."/>
            <person name="Militscher J."/>
            <person name="Sellers P."/>
            <person name="Gill J.E."/>
            <person name="Feldblyum T.V."/>
            <person name="Preuss D."/>
            <person name="Lin X."/>
            <person name="Nierman W.C."/>
            <person name="Salzberg S.L."/>
            <person name="White O."/>
            <person name="Venter J.C."/>
            <person name="Fraser C.M."/>
            <person name="Kaneko T."/>
            <person name="Nakamura Y."/>
            <person name="Sato S."/>
            <person name="Kato T."/>
            <person name="Asamizu E."/>
            <person name="Sasamoto S."/>
            <person name="Kimura T."/>
            <person name="Idesawa K."/>
            <person name="Kawashima K."/>
            <person name="Kishida Y."/>
            <person name="Kiyokawa C."/>
            <person name="Kohara M."/>
            <person name="Matsumoto M."/>
            <person name="Matsuno A."/>
            <person name="Muraki A."/>
            <person name="Nakayama S."/>
            <person name="Nakazaki N."/>
            <person name="Shinpo S."/>
            <person name="Takeuchi C."/>
            <person name="Wada T."/>
            <person name="Watanabe A."/>
            <person name="Yamada M."/>
            <person name="Yasuda M."/>
            <person name="Tabata S."/>
        </authorList>
    </citation>
    <scope>NUCLEOTIDE SEQUENCE [LARGE SCALE GENOMIC DNA]</scope>
    <source>
        <strain>cv. Columbia</strain>
    </source>
</reference>
<reference key="4">
    <citation type="journal article" date="2017" name="Plant J.">
        <title>Araport11: a complete reannotation of the Arabidopsis thaliana reference genome.</title>
        <authorList>
            <person name="Cheng C.Y."/>
            <person name="Krishnakumar V."/>
            <person name="Chan A.P."/>
            <person name="Thibaud-Nissen F."/>
            <person name="Schobel S."/>
            <person name="Town C.D."/>
        </authorList>
    </citation>
    <scope>GENOME REANNOTATION</scope>
    <source>
        <strain>cv. Columbia</strain>
    </source>
</reference>
<reference key="5">
    <citation type="submission" date="2006-03" db="EMBL/GenBank/DDBJ databases">
        <title>Arabidopsis ORF clones.</title>
        <authorList>
            <person name="Shinn P."/>
            <person name="Chen H."/>
            <person name="Kim C.J."/>
            <person name="Ecker J.R."/>
        </authorList>
    </citation>
    <scope>NUCLEOTIDE SEQUENCE [LARGE SCALE MRNA]</scope>
    <source>
        <strain>cv. Columbia</strain>
    </source>
</reference>
<reference key="6">
    <citation type="journal article" date="2004" name="Cell. Mol. Life Sci.">
        <title>Plant glutaredoxins: still mysterious reducing systems.</title>
        <authorList>
            <person name="Rouhier N."/>
            <person name="Gelhaye E."/>
            <person name="Jacquot J.-P."/>
        </authorList>
    </citation>
    <scope>GENE FAMILY</scope>
    <scope>NOMENCLATURE</scope>
</reference>
<reference key="7">
    <citation type="journal article" date="2006" name="J. Exp. Bot.">
        <title>Genome-wide analysis of plant glutaredoxin systems.</title>
        <authorList>
            <person name="Rouhier N."/>
            <person name="Couturier J."/>
            <person name="Jacquot J.-P."/>
        </authorList>
    </citation>
    <scope>GENE FAMILY</scope>
</reference>
<reference key="8">
    <citation type="journal article" date="2008" name="Plant J.">
        <title>ROXY1 and ROXY2, two Arabidopsis glutaredoxin genes, are required for anther development.</title>
        <authorList>
            <person name="Xing S."/>
            <person name="Zachgo S."/>
        </authorList>
    </citation>
    <scope>FUNCTION</scope>
    <scope>TISSUE SPECIFICITY</scope>
    <scope>DISRUPTION PHENOTYPE</scope>
    <scope>MUTAGENESIS OF GLY-110</scope>
</reference>
<reference key="9">
    <citation type="journal article" date="2009" name="Plant Cell">
        <title>Nuclear activity of ROXY1, a glutaredoxin interacting with TGA factors, is required for petal development in Arabidopsis thaliana.</title>
        <authorList>
            <person name="Li S."/>
            <person name="Lauri A."/>
            <person name="Ziemann M."/>
            <person name="Busch A."/>
            <person name="Bhave M."/>
            <person name="Zachgo S."/>
        </authorList>
    </citation>
    <scope>GENE FAMILY</scope>
    <scope>FUNCTION</scope>
    <scope>SUBCELLULAR LOCATION</scope>
    <scope>INTERACTION WITH TGA2; TGA3; TGA7 AND PAN</scope>
</reference>
<reference key="10">
    <citation type="journal article" date="2010" name="Plant Physiol.">
        <title>Arabidopsis basic leucine-zipper transcription factors TGA9 and TGA10 interact with floral glutaredoxins ROXY1 and ROXY2 and are redundantly required for anther development.</title>
        <authorList>
            <person name="Murmu J."/>
            <person name="Bush M.J."/>
            <person name="Delong C."/>
            <person name="Li S."/>
            <person name="Xu M."/>
            <person name="Khan M."/>
            <person name="Malcolmson C."/>
            <person name="Fobert P.R."/>
            <person name="Zachgo S."/>
            <person name="Hepworth S.R."/>
        </authorList>
    </citation>
    <scope>INTERACTION WITH TGA9 AND TGA10</scope>
    <scope>DEVELOPMENTAL STAGE</scope>
    <scope>SUBCELLULAR LOCATION</scope>
    <source>
        <strain>cv. Columbia</strain>
    </source>
</reference>
<proteinExistence type="evidence at protein level"/>
<accession>Q96305</accession>
<accession>Q9S7X8</accession>
<comment type="function">
    <text evidence="1 4 5 6">Has a glutathione-disulfide oxidoreductase activity in the presence of NADPH and glutathione reductase. Reduces low molecular weight disulfides and proteins (By similarity). Involved in flower development as a regulator of petal primorida initiation and further petal morphogenesis. May mediate post-translational modifications of target proteins required for normal petal organ initiation and morphogenesis. ROXY1/TGA protein interactions can occur in vivo and support their biological relevance in petal development. May be involved in the regulation of the floral regulator class C gene AG (AGAMOUS).</text>
</comment>
<comment type="subunit">
    <text evidence="6 7">Interacts with TGA2, TGA3, TGA7 and PAN (PubMed:19218396). Interacts with TGA9 and TGA10 in the nucleus (PubMed:20805327).</text>
</comment>
<comment type="interaction">
    <interactant intactId="EBI-2257898">
        <id>Q96305</id>
    </interactant>
    <interactant intactId="EBI-2257975">
        <id>Q9SX27</id>
        <label>PAN</label>
    </interactant>
    <organismsDiffer>false</organismsDiffer>
    <experiments>3</experiments>
</comment>
<comment type="interaction">
    <interactant intactId="EBI-2257898">
        <id>Q96305</id>
    </interactant>
    <interactant intactId="EBI-541351">
        <id>Q39237</id>
        <label>TGA1</label>
    </interactant>
    <organismsDiffer>false</organismsDiffer>
    <experiments>4</experiments>
</comment>
<comment type="interaction">
    <interactant intactId="EBI-2257898">
        <id>Q96305</id>
    </interactant>
    <interactant intactId="EBI-541307">
        <id>P43273</id>
        <label>TGA2</label>
    </interactant>
    <organismsDiffer>false</organismsDiffer>
    <experiments>3</experiments>
</comment>
<comment type="interaction">
    <interactant intactId="EBI-2257898">
        <id>Q96305</id>
    </interactant>
    <interactant intactId="EBI-541366">
        <id>Q39234</id>
        <label>TGA3</label>
    </interactant>
    <organismsDiffer>false</organismsDiffer>
    <experiments>6</experiments>
</comment>
<comment type="interaction">
    <interactant intactId="EBI-2257898">
        <id>Q96305</id>
    </interactant>
    <interactant intactId="EBI-541400">
        <id>Q93ZE2</id>
        <label>TGA7</label>
    </interactant>
    <organismsDiffer>false</organismsDiffer>
    <experiments>3</experiments>
</comment>
<comment type="interaction">
    <interactant intactId="EBI-2257898">
        <id>Q96305</id>
    </interactant>
    <interactant intactId="EBI-4426557">
        <id>Q84MB2</id>
        <label>TIFY8</label>
    </interactant>
    <organismsDiffer>false</organismsDiffer>
    <experiments>3</experiments>
</comment>
<comment type="subcellular location">
    <subcellularLocation>
        <location evidence="2">Cytoplasm</location>
    </subcellularLocation>
    <subcellularLocation>
        <location evidence="6 7">Nucleus</location>
    </subcellularLocation>
</comment>
<comment type="tissue specificity">
    <text evidence="4 5">Highly expressed in inflorescences, roots, and siliques. Expressed at lower levels in mature flowers.</text>
</comment>
<comment type="developmental stage">
    <text evidence="4 7">Expressed first in the inflorescence apex, then in young floral primordia, and in the petal and stamen primordia (PubMed:15728668). Localized to the tapetum and middle layers (PubMed:20805327).</text>
</comment>
<comment type="disruption phenotype">
    <text evidence="4 5">Plants show a reduced number of petal primordia and abnormalities during further petal development. Defection in sporogenous cell formation in adaxial anther lobes when associated with the disruption of GRXC8/ROXY2 leading to fertility defects.</text>
</comment>
<comment type="similarity">
    <text evidence="8">Belongs to the glutaredoxin family. CC-type subfamily.</text>
</comment>
<comment type="sequence caution" evidence="8">
    <conflict type="erroneous gene model prediction">
        <sequence resource="EMBL-CDS" id="AAB07873"/>
    </conflict>
</comment>